<comment type="function">
    <text evidence="2">Component of the cytochrome c oxidase, the last enzyme in the mitochondrial electron transport chain which drives oxidative phosphorylation. The respiratory chain contains 3 multisubunit complexes succinate dehydrogenase (complex II, CII), ubiquinol-cytochrome c oxidoreductase (cytochrome b-c1 complex, complex III, CIII) and cytochrome c oxidase (complex IV, CIV), that cooperate to transfer electrons derived from NADH and succinate to molecular oxygen, creating an electrochemical gradient over the inner membrane that drives transmembrane transport and the ATP synthase. Cytochrome c oxidase is the component of the respiratory chain that catalyzes the reduction of oxygen to water. Electrons originating from reduced cytochrome c in the intermembrane space (IMS) are transferred via the dinuclear copper A center (CU(A)) of subunit 2 and heme A of subunit 1 to the active site in subunit 1, a binuclear center (BNC) formed by heme A3 and copper B (CU(B)). The BNC reduces molecular oxygen to 2 water molecules using 4 electrons from cytochrome c in the IMS and 4 protons from the mitochondrial matrix.</text>
</comment>
<comment type="catalytic activity">
    <reaction evidence="2">
        <text>4 Fe(II)-[cytochrome c] + O2 + 8 H(+)(in) = 4 Fe(III)-[cytochrome c] + 2 H2O + 4 H(+)(out)</text>
        <dbReference type="Rhea" id="RHEA:11436"/>
        <dbReference type="Rhea" id="RHEA-COMP:10350"/>
        <dbReference type="Rhea" id="RHEA-COMP:14399"/>
        <dbReference type="ChEBI" id="CHEBI:15377"/>
        <dbReference type="ChEBI" id="CHEBI:15378"/>
        <dbReference type="ChEBI" id="CHEBI:15379"/>
        <dbReference type="ChEBI" id="CHEBI:29033"/>
        <dbReference type="ChEBI" id="CHEBI:29034"/>
        <dbReference type="EC" id="7.1.1.9"/>
    </reaction>
    <physiologicalReaction direction="left-to-right" evidence="2">
        <dbReference type="Rhea" id="RHEA:11437"/>
    </physiologicalReaction>
</comment>
<comment type="cofactor">
    <cofactor evidence="3">
        <name>Cu cation</name>
        <dbReference type="ChEBI" id="CHEBI:23378"/>
    </cofactor>
    <text evidence="3">Binds a dinuclear copper A center per subunit.</text>
</comment>
<comment type="subunit">
    <text evidence="1 3">Component of the cytochrome c oxidase (complex IV, CIV), a multisubunit enzyme composed of 14 subunits. The complex is composed of a catalytic core of 3 subunits MT-CO1, MT-CO2 and MT-CO3, encoded in the mitochondrial DNA, and 11 supernumerary subunits COX4I, COX5A, COX5B, COX6A, COX6B, COX6C, COX7A, COX7B, COX7C, COX8 and NDUFA4, which are encoded in the nuclear genome. The complex exists as a monomer or a dimer and forms supercomplexes (SCs) in the inner mitochondrial membrane with NADH-ubiquinone oxidoreductase (complex I, CI) and ubiquinol-cytochrome c oxidoreductase (cytochrome b-c1 complex, complex III, CIII), resulting in different assemblies (supercomplex SCI(1)III(2)IV(1) and megacomplex MCI(2)III(2)IV(2)) (By similarity). Found in a complex with TMEM177, COA6, COX18, COX20, SCO1 and SCO2. Interacts with TMEM177 in a COX20-dependent manner. Interacts with COX20. Interacts with COX16 (By similarity).</text>
</comment>
<comment type="subcellular location">
    <subcellularLocation>
        <location evidence="3">Mitochondrion inner membrane</location>
        <topology evidence="3">Multi-pass membrane protein</topology>
    </subcellularLocation>
</comment>
<comment type="similarity">
    <text evidence="4">Belongs to the cytochrome c oxidase subunit 2 family.</text>
</comment>
<accession>P24986</accession>
<gene>
    <name type="primary">MT-CO2</name>
    <name type="synonym">COII</name>
    <name type="synonym">COX2</name>
    <name type="synonym">COXII</name>
    <name type="synonym">MTCO2</name>
</gene>
<geneLocation type="mitochondrion"/>
<reference key="1">
    <citation type="journal article" date="1991" name="J. Mol. Evol.">
        <title>The complete nucleotide sequence of the mitochondrial DNA of the fin whale, Balaenoptera physalus.</title>
        <authorList>
            <person name="Arnason U."/>
            <person name="Gullberg A."/>
            <person name="Widegren B."/>
        </authorList>
    </citation>
    <scope>NUCLEOTIDE SEQUENCE [GENOMIC DNA]</scope>
    <source>
        <strain>Isolate No. 27 / Anno 1987</strain>
        <tissue>Liver</tissue>
    </source>
</reference>
<keyword id="KW-0186">Copper</keyword>
<keyword id="KW-0249">Electron transport</keyword>
<keyword id="KW-0460">Magnesium</keyword>
<keyword id="KW-0472">Membrane</keyword>
<keyword id="KW-0479">Metal-binding</keyword>
<keyword id="KW-0496">Mitochondrion</keyword>
<keyword id="KW-0999">Mitochondrion inner membrane</keyword>
<keyword id="KW-0679">Respiratory chain</keyword>
<keyword id="KW-1278">Translocase</keyword>
<keyword id="KW-0812">Transmembrane</keyword>
<keyword id="KW-1133">Transmembrane helix</keyword>
<keyword id="KW-0813">Transport</keyword>
<sequence>MAYPFQLGFQDAASPIMEELLHFHDHTLMIVFLISSLVLYIITLMLTTKLTHTSTMDAQEVETVWTILPAIILILIALPSLRILYMMDEVNNPSLTVKTMGHQWYWSYEYTDYEDLSFDSYMIPTSDLKPGELRLLEVDNRVVLPMEMTIRMLVSSEDVLHSWAVPSLGLKTDAIPGRLNQTTLMSTRPGLFYGQCSEICGSNHSFMPIVLELVPLEVFEKWSVSML</sequence>
<protein>
    <recommendedName>
        <fullName>Cytochrome c oxidase subunit 2</fullName>
        <ecNumber>7.1.1.9</ecNumber>
    </recommendedName>
    <alternativeName>
        <fullName>Cytochrome c oxidase polypeptide II</fullName>
    </alternativeName>
</protein>
<dbReference type="EC" id="7.1.1.9"/>
<dbReference type="EMBL" id="X61145">
    <property type="protein sequence ID" value="CAA43452.1"/>
    <property type="molecule type" value="Genomic_DNA"/>
</dbReference>
<dbReference type="PIR" id="D58850">
    <property type="entry name" value="D58850"/>
</dbReference>
<dbReference type="RefSeq" id="NP_006892.1">
    <property type="nucleotide sequence ID" value="NC_001321.1"/>
</dbReference>
<dbReference type="SMR" id="P24986"/>
<dbReference type="GeneID" id="807612"/>
<dbReference type="CTD" id="4513"/>
<dbReference type="GO" id="GO:0005743">
    <property type="term" value="C:mitochondrial inner membrane"/>
    <property type="evidence" value="ECO:0007669"/>
    <property type="project" value="UniProtKB-SubCell"/>
</dbReference>
<dbReference type="GO" id="GO:0045277">
    <property type="term" value="C:respiratory chain complex IV"/>
    <property type="evidence" value="ECO:0000250"/>
    <property type="project" value="UniProtKB"/>
</dbReference>
<dbReference type="GO" id="GO:0005507">
    <property type="term" value="F:copper ion binding"/>
    <property type="evidence" value="ECO:0007669"/>
    <property type="project" value="InterPro"/>
</dbReference>
<dbReference type="GO" id="GO:0004129">
    <property type="term" value="F:cytochrome-c oxidase activity"/>
    <property type="evidence" value="ECO:0007669"/>
    <property type="project" value="UniProtKB-EC"/>
</dbReference>
<dbReference type="GO" id="GO:0042773">
    <property type="term" value="P:ATP synthesis coupled electron transport"/>
    <property type="evidence" value="ECO:0007669"/>
    <property type="project" value="TreeGrafter"/>
</dbReference>
<dbReference type="CDD" id="cd13912">
    <property type="entry name" value="CcO_II_C"/>
    <property type="match status" value="1"/>
</dbReference>
<dbReference type="FunFam" id="1.10.287.90:FF:000001">
    <property type="entry name" value="Cytochrome c oxidase subunit 2"/>
    <property type="match status" value="1"/>
</dbReference>
<dbReference type="FunFam" id="2.60.40.420:FF:000001">
    <property type="entry name" value="Cytochrome c oxidase subunit 2"/>
    <property type="match status" value="1"/>
</dbReference>
<dbReference type="Gene3D" id="1.10.287.90">
    <property type="match status" value="1"/>
</dbReference>
<dbReference type="Gene3D" id="2.60.40.420">
    <property type="entry name" value="Cupredoxins - blue copper proteins"/>
    <property type="match status" value="1"/>
</dbReference>
<dbReference type="InterPro" id="IPR045187">
    <property type="entry name" value="CcO_II"/>
</dbReference>
<dbReference type="InterPro" id="IPR002429">
    <property type="entry name" value="CcO_II-like_C"/>
</dbReference>
<dbReference type="InterPro" id="IPR034210">
    <property type="entry name" value="CcO_II_C"/>
</dbReference>
<dbReference type="InterPro" id="IPR001505">
    <property type="entry name" value="Copper_CuA"/>
</dbReference>
<dbReference type="InterPro" id="IPR008972">
    <property type="entry name" value="Cupredoxin"/>
</dbReference>
<dbReference type="InterPro" id="IPR014222">
    <property type="entry name" value="Cyt_c_oxidase_su2"/>
</dbReference>
<dbReference type="InterPro" id="IPR011759">
    <property type="entry name" value="Cyt_c_oxidase_su2_TM_dom"/>
</dbReference>
<dbReference type="InterPro" id="IPR036257">
    <property type="entry name" value="Cyt_c_oxidase_su2_TM_sf"/>
</dbReference>
<dbReference type="NCBIfam" id="TIGR02866">
    <property type="entry name" value="CoxB"/>
    <property type="match status" value="1"/>
</dbReference>
<dbReference type="PANTHER" id="PTHR22888:SF9">
    <property type="entry name" value="CYTOCHROME C OXIDASE SUBUNIT 2"/>
    <property type="match status" value="1"/>
</dbReference>
<dbReference type="PANTHER" id="PTHR22888">
    <property type="entry name" value="CYTOCHROME C OXIDASE, SUBUNIT II"/>
    <property type="match status" value="1"/>
</dbReference>
<dbReference type="Pfam" id="PF00116">
    <property type="entry name" value="COX2"/>
    <property type="match status" value="1"/>
</dbReference>
<dbReference type="Pfam" id="PF02790">
    <property type="entry name" value="COX2_TM"/>
    <property type="match status" value="1"/>
</dbReference>
<dbReference type="PRINTS" id="PR01166">
    <property type="entry name" value="CYCOXIDASEII"/>
</dbReference>
<dbReference type="SUPFAM" id="SSF49503">
    <property type="entry name" value="Cupredoxins"/>
    <property type="match status" value="1"/>
</dbReference>
<dbReference type="SUPFAM" id="SSF81464">
    <property type="entry name" value="Cytochrome c oxidase subunit II-like, transmembrane region"/>
    <property type="match status" value="1"/>
</dbReference>
<dbReference type="PROSITE" id="PS00078">
    <property type="entry name" value="COX2"/>
    <property type="match status" value="1"/>
</dbReference>
<dbReference type="PROSITE" id="PS50857">
    <property type="entry name" value="COX2_CUA"/>
    <property type="match status" value="1"/>
</dbReference>
<dbReference type="PROSITE" id="PS50999">
    <property type="entry name" value="COX2_TM"/>
    <property type="match status" value="1"/>
</dbReference>
<organism>
    <name type="scientific">Balaenoptera physalus</name>
    <name type="common">Fin whale</name>
    <name type="synonym">Balaena physalus</name>
    <dbReference type="NCBI Taxonomy" id="9770"/>
    <lineage>
        <taxon>Eukaryota</taxon>
        <taxon>Metazoa</taxon>
        <taxon>Chordata</taxon>
        <taxon>Craniata</taxon>
        <taxon>Vertebrata</taxon>
        <taxon>Euteleostomi</taxon>
        <taxon>Mammalia</taxon>
        <taxon>Eutheria</taxon>
        <taxon>Laurasiatheria</taxon>
        <taxon>Artiodactyla</taxon>
        <taxon>Whippomorpha</taxon>
        <taxon>Cetacea</taxon>
        <taxon>Mysticeti</taxon>
        <taxon>Balaenopteridae</taxon>
        <taxon>Balaenoptera</taxon>
    </lineage>
</organism>
<name>COX2_BALPH</name>
<feature type="chain" id="PRO_0000183508" description="Cytochrome c oxidase subunit 2">
    <location>
        <begin position="1"/>
        <end position="227"/>
    </location>
</feature>
<feature type="topological domain" description="Mitochondrial intermembrane" evidence="3">
    <location>
        <begin position="1"/>
        <end position="14"/>
    </location>
</feature>
<feature type="transmembrane region" description="Helical; Name=I" evidence="3">
    <location>
        <begin position="15"/>
        <end position="45"/>
    </location>
</feature>
<feature type="topological domain" description="Mitochondrial matrix" evidence="3">
    <location>
        <begin position="46"/>
        <end position="59"/>
    </location>
</feature>
<feature type="transmembrane region" description="Helical; Name=II" evidence="3">
    <location>
        <begin position="60"/>
        <end position="87"/>
    </location>
</feature>
<feature type="topological domain" description="Mitochondrial intermembrane" evidence="3">
    <location>
        <begin position="88"/>
        <end position="227"/>
    </location>
</feature>
<feature type="binding site" evidence="3">
    <location>
        <position position="161"/>
    </location>
    <ligand>
        <name>Cu cation</name>
        <dbReference type="ChEBI" id="CHEBI:23378"/>
        <label>A1</label>
    </ligand>
</feature>
<feature type="binding site" evidence="3">
    <location>
        <position position="196"/>
    </location>
    <ligand>
        <name>Cu cation</name>
        <dbReference type="ChEBI" id="CHEBI:23378"/>
        <label>A1</label>
    </ligand>
</feature>
<feature type="binding site" evidence="3">
    <location>
        <position position="196"/>
    </location>
    <ligand>
        <name>Cu cation</name>
        <dbReference type="ChEBI" id="CHEBI:23378"/>
        <label>A2</label>
    </ligand>
</feature>
<feature type="binding site" evidence="3">
    <location>
        <position position="198"/>
    </location>
    <ligand>
        <name>Cu cation</name>
        <dbReference type="ChEBI" id="CHEBI:23378"/>
        <label>A2</label>
    </ligand>
</feature>
<feature type="binding site" evidence="3">
    <location>
        <position position="198"/>
    </location>
    <ligand>
        <name>Mg(2+)</name>
        <dbReference type="ChEBI" id="CHEBI:18420"/>
        <note>ligand shared with MT-CO1</note>
    </ligand>
</feature>
<feature type="binding site" evidence="3">
    <location>
        <position position="200"/>
    </location>
    <ligand>
        <name>Cu cation</name>
        <dbReference type="ChEBI" id="CHEBI:23378"/>
        <label>A1</label>
    </ligand>
</feature>
<feature type="binding site" evidence="3">
    <location>
        <position position="200"/>
    </location>
    <ligand>
        <name>Cu cation</name>
        <dbReference type="ChEBI" id="CHEBI:23378"/>
        <label>A2</label>
    </ligand>
</feature>
<feature type="binding site" evidence="3">
    <location>
        <position position="204"/>
    </location>
    <ligand>
        <name>Cu cation</name>
        <dbReference type="ChEBI" id="CHEBI:23378"/>
        <label>A2</label>
    </ligand>
</feature>
<feature type="binding site" evidence="3">
    <location>
        <position position="207"/>
    </location>
    <ligand>
        <name>Cu cation</name>
        <dbReference type="ChEBI" id="CHEBI:23378"/>
        <label>A1</label>
    </ligand>
</feature>
<evidence type="ECO:0000250" key="1">
    <source>
        <dbReference type="UniProtKB" id="P00403"/>
    </source>
</evidence>
<evidence type="ECO:0000250" key="2">
    <source>
        <dbReference type="UniProtKB" id="P00410"/>
    </source>
</evidence>
<evidence type="ECO:0000250" key="3">
    <source>
        <dbReference type="UniProtKB" id="P68530"/>
    </source>
</evidence>
<evidence type="ECO:0000305" key="4"/>
<proteinExistence type="inferred from homology"/>